<protein>
    <recommendedName>
        <fullName evidence="1">GMP reductase</fullName>
        <ecNumber evidence="1">1.7.1.7</ecNumber>
    </recommendedName>
    <alternativeName>
        <fullName evidence="1">Guanosine 5'-monophosphate oxidoreductase</fullName>
        <shortName evidence="1">Guanosine monophosphate reductase</shortName>
    </alternativeName>
</protein>
<comment type="function">
    <text evidence="1">Catalyzes the irreversible NADPH-dependent deamination of GMP to IMP. It functions in the conversion of nucleobase, nucleoside and nucleotide derivatives of G to A nucleotides, and in maintaining the intracellular balance of A and G nucleotides.</text>
</comment>
<comment type="catalytic activity">
    <reaction evidence="1">
        <text>IMP + NH4(+) + NADP(+) = GMP + NADPH + 2 H(+)</text>
        <dbReference type="Rhea" id="RHEA:17185"/>
        <dbReference type="ChEBI" id="CHEBI:15378"/>
        <dbReference type="ChEBI" id="CHEBI:28938"/>
        <dbReference type="ChEBI" id="CHEBI:57783"/>
        <dbReference type="ChEBI" id="CHEBI:58053"/>
        <dbReference type="ChEBI" id="CHEBI:58115"/>
        <dbReference type="ChEBI" id="CHEBI:58349"/>
        <dbReference type="EC" id="1.7.1.7"/>
    </reaction>
</comment>
<comment type="subunit">
    <text evidence="1">Homotetramer.</text>
</comment>
<comment type="similarity">
    <text evidence="1">Belongs to the IMPDH/GMPR family. GuaC type 1 subfamily.</text>
</comment>
<name>GUAC_SALPC</name>
<proteinExistence type="inferred from homology"/>
<sequence length="347" mass="37165">MRIEEDLKLGFKDVLIRPKRSTLKSRSDVELERQFTFKYSGQTWSGVPIIAANMDTVGTFEMAQALAGFDILTAVHKHYTVEEWAAFINTASADVLKHVMVSTGTSDADFEKTVQILALNPALNFVCIDVANGYSEHFVQFVAKAREAWPTKTICAGNVVTGEMCEELILSGADIVKVGIGPGSVCTTRVKTGVGYPQLSAVIECADAAHGLGGMIVSDGGCTMPGDVAKAFGGGADFVMLGGMLAGHEESGGSVVEENGEKFMLFYGMSSESAMNRHVGGVAKYRAAEGKTVKLPLRGPVGNTARDILGGLRSACTYVGASRLKELTKRTTFIRVQEQENRIFNSL</sequence>
<evidence type="ECO:0000255" key="1">
    <source>
        <dbReference type="HAMAP-Rule" id="MF_00596"/>
    </source>
</evidence>
<dbReference type="EC" id="1.7.1.7" evidence="1"/>
<dbReference type="EMBL" id="CP000857">
    <property type="protein sequence ID" value="ACN44343.1"/>
    <property type="molecule type" value="Genomic_DNA"/>
</dbReference>
<dbReference type="RefSeq" id="WP_001217369.1">
    <property type="nucleotide sequence ID" value="NC_012125.1"/>
</dbReference>
<dbReference type="SMR" id="C0Q5K1"/>
<dbReference type="KEGG" id="sei:SPC_0152"/>
<dbReference type="HOGENOM" id="CLU_022552_5_3_6"/>
<dbReference type="Proteomes" id="UP000001599">
    <property type="component" value="Chromosome"/>
</dbReference>
<dbReference type="GO" id="GO:0005829">
    <property type="term" value="C:cytosol"/>
    <property type="evidence" value="ECO:0007669"/>
    <property type="project" value="TreeGrafter"/>
</dbReference>
<dbReference type="GO" id="GO:1902560">
    <property type="term" value="C:GMP reductase complex"/>
    <property type="evidence" value="ECO:0007669"/>
    <property type="project" value="InterPro"/>
</dbReference>
<dbReference type="GO" id="GO:0003920">
    <property type="term" value="F:GMP reductase activity"/>
    <property type="evidence" value="ECO:0007669"/>
    <property type="project" value="UniProtKB-UniRule"/>
</dbReference>
<dbReference type="GO" id="GO:0046872">
    <property type="term" value="F:metal ion binding"/>
    <property type="evidence" value="ECO:0007669"/>
    <property type="project" value="UniProtKB-KW"/>
</dbReference>
<dbReference type="GO" id="GO:0006163">
    <property type="term" value="P:purine nucleotide metabolic process"/>
    <property type="evidence" value="ECO:0007669"/>
    <property type="project" value="UniProtKB-UniRule"/>
</dbReference>
<dbReference type="CDD" id="cd00381">
    <property type="entry name" value="IMPDH"/>
    <property type="match status" value="1"/>
</dbReference>
<dbReference type="FunFam" id="3.20.20.70:FF:000012">
    <property type="entry name" value="GMP reductase"/>
    <property type="match status" value="1"/>
</dbReference>
<dbReference type="Gene3D" id="3.20.20.70">
    <property type="entry name" value="Aldolase class I"/>
    <property type="match status" value="1"/>
</dbReference>
<dbReference type="HAMAP" id="MF_00596">
    <property type="entry name" value="GMP_reduct_type1"/>
    <property type="match status" value="1"/>
</dbReference>
<dbReference type="InterPro" id="IPR013785">
    <property type="entry name" value="Aldolase_TIM"/>
</dbReference>
<dbReference type="InterPro" id="IPR050139">
    <property type="entry name" value="GMP_reductase"/>
</dbReference>
<dbReference type="InterPro" id="IPR005993">
    <property type="entry name" value="GMPR"/>
</dbReference>
<dbReference type="InterPro" id="IPR015875">
    <property type="entry name" value="IMP_DH/GMP_Rdtase_CS"/>
</dbReference>
<dbReference type="InterPro" id="IPR001093">
    <property type="entry name" value="IMP_DH_GMPRt"/>
</dbReference>
<dbReference type="NCBIfam" id="TIGR01305">
    <property type="entry name" value="GMP_reduct_1"/>
    <property type="match status" value="1"/>
</dbReference>
<dbReference type="NCBIfam" id="NF003470">
    <property type="entry name" value="PRK05096.1"/>
    <property type="match status" value="1"/>
</dbReference>
<dbReference type="PANTHER" id="PTHR43170">
    <property type="entry name" value="GMP REDUCTASE"/>
    <property type="match status" value="1"/>
</dbReference>
<dbReference type="PANTHER" id="PTHR43170:SF5">
    <property type="entry name" value="GMP REDUCTASE"/>
    <property type="match status" value="1"/>
</dbReference>
<dbReference type="Pfam" id="PF00478">
    <property type="entry name" value="IMPDH"/>
    <property type="match status" value="1"/>
</dbReference>
<dbReference type="PIRSF" id="PIRSF000235">
    <property type="entry name" value="GMP_reductase"/>
    <property type="match status" value="1"/>
</dbReference>
<dbReference type="SMART" id="SM01240">
    <property type="entry name" value="IMPDH"/>
    <property type="match status" value="1"/>
</dbReference>
<dbReference type="SUPFAM" id="SSF51412">
    <property type="entry name" value="Inosine monophosphate dehydrogenase (IMPDH)"/>
    <property type="match status" value="1"/>
</dbReference>
<dbReference type="PROSITE" id="PS00487">
    <property type="entry name" value="IMP_DH_GMP_RED"/>
    <property type="match status" value="1"/>
</dbReference>
<gene>
    <name evidence="1" type="primary">guaC</name>
    <name type="ordered locus">SPC_0152</name>
</gene>
<organism>
    <name type="scientific">Salmonella paratyphi C (strain RKS4594)</name>
    <dbReference type="NCBI Taxonomy" id="476213"/>
    <lineage>
        <taxon>Bacteria</taxon>
        <taxon>Pseudomonadati</taxon>
        <taxon>Pseudomonadota</taxon>
        <taxon>Gammaproteobacteria</taxon>
        <taxon>Enterobacterales</taxon>
        <taxon>Enterobacteriaceae</taxon>
        <taxon>Salmonella</taxon>
    </lineage>
</organism>
<keyword id="KW-0479">Metal-binding</keyword>
<keyword id="KW-0521">NADP</keyword>
<keyword id="KW-0560">Oxidoreductase</keyword>
<keyword id="KW-0630">Potassium</keyword>
<accession>C0Q5K1</accession>
<feature type="chain" id="PRO_1000146988" description="GMP reductase">
    <location>
        <begin position="1"/>
        <end position="347"/>
    </location>
</feature>
<feature type="active site" description="Thioimidate intermediate" evidence="1">
    <location>
        <position position="186"/>
    </location>
</feature>
<feature type="binding site" evidence="1">
    <location>
        <begin position="108"/>
        <end position="131"/>
    </location>
    <ligand>
        <name>NADP(+)</name>
        <dbReference type="ChEBI" id="CHEBI:58349"/>
    </ligand>
</feature>
<feature type="binding site" evidence="1">
    <location>
        <position position="181"/>
    </location>
    <ligand>
        <name>K(+)</name>
        <dbReference type="ChEBI" id="CHEBI:29103"/>
    </ligand>
</feature>
<feature type="binding site" evidence="1">
    <location>
        <position position="183"/>
    </location>
    <ligand>
        <name>K(+)</name>
        <dbReference type="ChEBI" id="CHEBI:29103"/>
    </ligand>
</feature>
<feature type="binding site" evidence="1">
    <location>
        <begin position="216"/>
        <end position="239"/>
    </location>
    <ligand>
        <name>NADP(+)</name>
        <dbReference type="ChEBI" id="CHEBI:58349"/>
    </ligand>
</feature>
<reference key="1">
    <citation type="journal article" date="2009" name="PLoS ONE">
        <title>Salmonella paratyphi C: genetic divergence from Salmonella choleraesuis and pathogenic convergence with Salmonella typhi.</title>
        <authorList>
            <person name="Liu W.-Q."/>
            <person name="Feng Y."/>
            <person name="Wang Y."/>
            <person name="Zou Q.-H."/>
            <person name="Chen F."/>
            <person name="Guo J.-T."/>
            <person name="Peng Y.-H."/>
            <person name="Jin Y."/>
            <person name="Li Y.-G."/>
            <person name="Hu S.-N."/>
            <person name="Johnston R.N."/>
            <person name="Liu G.-R."/>
            <person name="Liu S.-L."/>
        </authorList>
    </citation>
    <scope>NUCLEOTIDE SEQUENCE [LARGE SCALE GENOMIC DNA]</scope>
    <source>
        <strain>RKS4594</strain>
    </source>
</reference>